<keyword id="KW-0539">Nucleus</keyword>
<keyword id="KW-1185">Reference proteome</keyword>
<keyword id="KW-0677">Repeat</keyword>
<keyword id="KW-0804">Transcription</keyword>
<keyword id="KW-0805">Transcription regulation</keyword>
<keyword id="KW-0853">WD repeat</keyword>
<reference key="1">
    <citation type="journal article" date="2005" name="Science">
        <title>The transcriptional landscape of the mammalian genome.</title>
        <authorList>
            <person name="Carninci P."/>
            <person name="Kasukawa T."/>
            <person name="Katayama S."/>
            <person name="Gough J."/>
            <person name="Frith M.C."/>
            <person name="Maeda N."/>
            <person name="Oyama R."/>
            <person name="Ravasi T."/>
            <person name="Lenhard B."/>
            <person name="Wells C."/>
            <person name="Kodzius R."/>
            <person name="Shimokawa K."/>
            <person name="Bajic V.B."/>
            <person name="Brenner S.E."/>
            <person name="Batalov S."/>
            <person name="Forrest A.R."/>
            <person name="Zavolan M."/>
            <person name="Davis M.J."/>
            <person name="Wilming L.G."/>
            <person name="Aidinis V."/>
            <person name="Allen J.E."/>
            <person name="Ambesi-Impiombato A."/>
            <person name="Apweiler R."/>
            <person name="Aturaliya R.N."/>
            <person name="Bailey T.L."/>
            <person name="Bansal M."/>
            <person name="Baxter L."/>
            <person name="Beisel K.W."/>
            <person name="Bersano T."/>
            <person name="Bono H."/>
            <person name="Chalk A.M."/>
            <person name="Chiu K.P."/>
            <person name="Choudhary V."/>
            <person name="Christoffels A."/>
            <person name="Clutterbuck D.R."/>
            <person name="Crowe M.L."/>
            <person name="Dalla E."/>
            <person name="Dalrymple B.P."/>
            <person name="de Bono B."/>
            <person name="Della Gatta G."/>
            <person name="di Bernardo D."/>
            <person name="Down T."/>
            <person name="Engstrom P."/>
            <person name="Fagiolini M."/>
            <person name="Faulkner G."/>
            <person name="Fletcher C.F."/>
            <person name="Fukushima T."/>
            <person name="Furuno M."/>
            <person name="Futaki S."/>
            <person name="Gariboldi M."/>
            <person name="Georgii-Hemming P."/>
            <person name="Gingeras T.R."/>
            <person name="Gojobori T."/>
            <person name="Green R.E."/>
            <person name="Gustincich S."/>
            <person name="Harbers M."/>
            <person name="Hayashi Y."/>
            <person name="Hensch T.K."/>
            <person name="Hirokawa N."/>
            <person name="Hill D."/>
            <person name="Huminiecki L."/>
            <person name="Iacono M."/>
            <person name="Ikeo K."/>
            <person name="Iwama A."/>
            <person name="Ishikawa T."/>
            <person name="Jakt M."/>
            <person name="Kanapin A."/>
            <person name="Katoh M."/>
            <person name="Kawasawa Y."/>
            <person name="Kelso J."/>
            <person name="Kitamura H."/>
            <person name="Kitano H."/>
            <person name="Kollias G."/>
            <person name="Krishnan S.P."/>
            <person name="Kruger A."/>
            <person name="Kummerfeld S.K."/>
            <person name="Kurochkin I.V."/>
            <person name="Lareau L.F."/>
            <person name="Lazarevic D."/>
            <person name="Lipovich L."/>
            <person name="Liu J."/>
            <person name="Liuni S."/>
            <person name="McWilliam S."/>
            <person name="Madan Babu M."/>
            <person name="Madera M."/>
            <person name="Marchionni L."/>
            <person name="Matsuda H."/>
            <person name="Matsuzawa S."/>
            <person name="Miki H."/>
            <person name="Mignone F."/>
            <person name="Miyake S."/>
            <person name="Morris K."/>
            <person name="Mottagui-Tabar S."/>
            <person name="Mulder N."/>
            <person name="Nakano N."/>
            <person name="Nakauchi H."/>
            <person name="Ng P."/>
            <person name="Nilsson R."/>
            <person name="Nishiguchi S."/>
            <person name="Nishikawa S."/>
            <person name="Nori F."/>
            <person name="Ohara O."/>
            <person name="Okazaki Y."/>
            <person name="Orlando V."/>
            <person name="Pang K.C."/>
            <person name="Pavan W.J."/>
            <person name="Pavesi G."/>
            <person name="Pesole G."/>
            <person name="Petrovsky N."/>
            <person name="Piazza S."/>
            <person name="Reed J."/>
            <person name="Reid J.F."/>
            <person name="Ring B.Z."/>
            <person name="Ringwald M."/>
            <person name="Rost B."/>
            <person name="Ruan Y."/>
            <person name="Salzberg S.L."/>
            <person name="Sandelin A."/>
            <person name="Schneider C."/>
            <person name="Schoenbach C."/>
            <person name="Sekiguchi K."/>
            <person name="Semple C.A."/>
            <person name="Seno S."/>
            <person name="Sessa L."/>
            <person name="Sheng Y."/>
            <person name="Shibata Y."/>
            <person name="Shimada H."/>
            <person name="Shimada K."/>
            <person name="Silva D."/>
            <person name="Sinclair B."/>
            <person name="Sperling S."/>
            <person name="Stupka E."/>
            <person name="Sugiura K."/>
            <person name="Sultana R."/>
            <person name="Takenaka Y."/>
            <person name="Taki K."/>
            <person name="Tammoja K."/>
            <person name="Tan S.L."/>
            <person name="Tang S."/>
            <person name="Taylor M.S."/>
            <person name="Tegner J."/>
            <person name="Teichmann S.A."/>
            <person name="Ueda H.R."/>
            <person name="van Nimwegen E."/>
            <person name="Verardo R."/>
            <person name="Wei C.L."/>
            <person name="Yagi K."/>
            <person name="Yamanishi H."/>
            <person name="Zabarovsky E."/>
            <person name="Zhu S."/>
            <person name="Zimmer A."/>
            <person name="Hide W."/>
            <person name="Bult C."/>
            <person name="Grimmond S.M."/>
            <person name="Teasdale R.D."/>
            <person name="Liu E.T."/>
            <person name="Brusic V."/>
            <person name="Quackenbush J."/>
            <person name="Wahlestedt C."/>
            <person name="Mattick J.S."/>
            <person name="Hume D.A."/>
            <person name="Kai C."/>
            <person name="Sasaki D."/>
            <person name="Tomaru Y."/>
            <person name="Fukuda S."/>
            <person name="Kanamori-Katayama M."/>
            <person name="Suzuki M."/>
            <person name="Aoki J."/>
            <person name="Arakawa T."/>
            <person name="Iida J."/>
            <person name="Imamura K."/>
            <person name="Itoh M."/>
            <person name="Kato T."/>
            <person name="Kawaji H."/>
            <person name="Kawagashira N."/>
            <person name="Kawashima T."/>
            <person name="Kojima M."/>
            <person name="Kondo S."/>
            <person name="Konno H."/>
            <person name="Nakano K."/>
            <person name="Ninomiya N."/>
            <person name="Nishio T."/>
            <person name="Okada M."/>
            <person name="Plessy C."/>
            <person name="Shibata K."/>
            <person name="Shiraki T."/>
            <person name="Suzuki S."/>
            <person name="Tagami M."/>
            <person name="Waki K."/>
            <person name="Watahiki A."/>
            <person name="Okamura-Oho Y."/>
            <person name="Suzuki H."/>
            <person name="Kawai J."/>
            <person name="Hayashizaki Y."/>
        </authorList>
    </citation>
    <scope>NUCLEOTIDE SEQUENCE [LARGE SCALE MRNA]</scope>
    <source>
        <strain>C57BL/6J</strain>
        <tissue>Medulla oblongata</tissue>
        <tissue>Thymus</tissue>
    </source>
</reference>
<reference key="2">
    <citation type="journal article" date="2010" name="Cell">
        <title>A tissue-specific atlas of mouse protein phosphorylation and expression.</title>
        <authorList>
            <person name="Huttlin E.L."/>
            <person name="Jedrychowski M.P."/>
            <person name="Elias J.E."/>
            <person name="Goswami T."/>
            <person name="Rad R."/>
            <person name="Beausoleil S.A."/>
            <person name="Villen J."/>
            <person name="Haas W."/>
            <person name="Sowa M.E."/>
            <person name="Gygi S.P."/>
        </authorList>
    </citation>
    <scope>IDENTIFICATION BY MASS SPECTROMETRY [LARGE SCALE ANALYSIS]</scope>
    <source>
        <tissue>Testis</tissue>
    </source>
</reference>
<name>TAF5_MOUSE</name>
<feature type="chain" id="PRO_0000051258" description="Transcription initiation factor TFIID subunit 5">
    <location>
        <begin position="1"/>
        <end position="801"/>
    </location>
</feature>
<feature type="domain" description="LisH" evidence="3">
    <location>
        <begin position="93"/>
        <end position="125"/>
    </location>
</feature>
<feature type="repeat" description="WD 1">
    <location>
        <begin position="469"/>
        <end position="508"/>
    </location>
</feature>
<feature type="repeat" description="WD 2">
    <location>
        <begin position="542"/>
        <end position="581"/>
    </location>
</feature>
<feature type="repeat" description="WD 3">
    <location>
        <begin position="584"/>
        <end position="625"/>
    </location>
</feature>
<feature type="repeat" description="WD 4">
    <location>
        <begin position="626"/>
        <end position="667"/>
    </location>
</feature>
<feature type="repeat" description="WD 5">
    <location>
        <begin position="668"/>
        <end position="707"/>
    </location>
</feature>
<feature type="repeat" description="WD 6">
    <location>
        <begin position="710"/>
        <end position="749"/>
    </location>
</feature>
<feature type="region of interest" description="Disordered" evidence="4">
    <location>
        <begin position="1"/>
        <end position="69"/>
    </location>
</feature>
<feature type="region of interest" description="Disordered" evidence="4">
    <location>
        <begin position="156"/>
        <end position="176"/>
    </location>
</feature>
<feature type="region of interest" description="Disordered" evidence="4">
    <location>
        <begin position="385"/>
        <end position="438"/>
    </location>
</feature>
<feature type="compositionally biased region" description="Gly residues" evidence="4">
    <location>
        <begin position="30"/>
        <end position="51"/>
    </location>
</feature>
<feature type="compositionally biased region" description="Acidic residues" evidence="4">
    <location>
        <begin position="385"/>
        <end position="396"/>
    </location>
</feature>
<feature type="compositionally biased region" description="Basic and acidic residues" evidence="4">
    <location>
        <begin position="408"/>
        <end position="419"/>
    </location>
</feature>
<feature type="sequence conflict" description="In Ref. 1; BAC27638." evidence="5" ref="1">
    <original>Q</original>
    <variation>E</variation>
    <location>
        <position position="27"/>
    </location>
</feature>
<feature type="sequence conflict" description="In Ref. 1; BAC27638." evidence="5" ref="1">
    <original>G</original>
    <variation>C</variation>
    <location>
        <position position="33"/>
    </location>
</feature>
<feature type="sequence conflict" description="In Ref. 1; BAC27638." evidence="5" ref="1">
    <original>GG</original>
    <variation>VV</variation>
    <location>
        <begin position="37"/>
        <end position="38"/>
    </location>
</feature>
<feature type="sequence conflict" description="In Ref. 1; BAC27638." evidence="5" ref="1">
    <original>A</original>
    <variation>S</variation>
    <location>
        <position position="56"/>
    </location>
</feature>
<feature type="sequence conflict" description="In Ref. 1; BAC27638." evidence="5" ref="1">
    <original>AVSAAAPAGAA</original>
    <variation>GASGGDPEEAV</variation>
    <location>
        <begin position="70"/>
        <end position="80"/>
    </location>
</feature>
<feature type="sequence conflict" description="In Ref. 1; BAC27638." evidence="5" ref="1">
    <original>AAP</original>
    <variation>DAL</variation>
    <location>
        <begin position="84"/>
        <end position="86"/>
    </location>
</feature>
<feature type="sequence conflict" description="In Ref. 1; BAC27638." evidence="5" ref="1">
    <original>PH</original>
    <variation>TN</variation>
    <location>
        <begin position="92"/>
        <end position="93"/>
    </location>
</feature>
<feature type="sequence conflict" description="In Ref. 1; BAC27638." evidence="5" ref="1">
    <original>Y</original>
    <variation>S</variation>
    <location>
        <position position="311"/>
    </location>
</feature>
<feature type="sequence conflict" description="In Ref. 1; BAC27638." evidence="5" ref="1">
    <original>Y</original>
    <variation>F</variation>
    <location>
        <position position="636"/>
    </location>
</feature>
<accession>Q8C092</accession>
<accession>Q8BTR2</accession>
<organism>
    <name type="scientific">Mus musculus</name>
    <name type="common">Mouse</name>
    <dbReference type="NCBI Taxonomy" id="10090"/>
    <lineage>
        <taxon>Eukaryota</taxon>
        <taxon>Metazoa</taxon>
        <taxon>Chordata</taxon>
        <taxon>Craniata</taxon>
        <taxon>Vertebrata</taxon>
        <taxon>Euteleostomi</taxon>
        <taxon>Mammalia</taxon>
        <taxon>Eutheria</taxon>
        <taxon>Euarchontoglires</taxon>
        <taxon>Glires</taxon>
        <taxon>Rodentia</taxon>
        <taxon>Myomorpha</taxon>
        <taxon>Muroidea</taxon>
        <taxon>Muridae</taxon>
        <taxon>Murinae</taxon>
        <taxon>Mus</taxon>
        <taxon>Mus</taxon>
    </lineage>
</organism>
<dbReference type="EMBL" id="AK031985">
    <property type="protein sequence ID" value="BAC27638.1"/>
    <property type="molecule type" value="mRNA"/>
</dbReference>
<dbReference type="EMBL" id="AK088953">
    <property type="protein sequence ID" value="BAC40670.1"/>
    <property type="molecule type" value="mRNA"/>
</dbReference>
<dbReference type="CCDS" id="CCDS29886.1"/>
<dbReference type="RefSeq" id="NP_796316.2">
    <property type="nucleotide sequence ID" value="NM_177342.3"/>
</dbReference>
<dbReference type="SMR" id="Q8C092"/>
<dbReference type="BioGRID" id="230488">
    <property type="interactions" value="4"/>
</dbReference>
<dbReference type="ComplexPortal" id="CPX-916">
    <property type="entry name" value="TFTC histone acetylation complex"/>
</dbReference>
<dbReference type="ComplexPortal" id="CPX-932">
    <property type="entry name" value="General transcription factor complex TFIID"/>
</dbReference>
<dbReference type="ComplexPortal" id="CPX-959">
    <property type="entry name" value="General transcription factor complex TFIID, Taf4b variant"/>
</dbReference>
<dbReference type="CORUM" id="Q8C092"/>
<dbReference type="FunCoup" id="Q8C092">
    <property type="interactions" value="2281"/>
</dbReference>
<dbReference type="IntAct" id="Q8C092">
    <property type="interactions" value="4"/>
</dbReference>
<dbReference type="STRING" id="10090.ENSMUSP00000026027"/>
<dbReference type="GlyGen" id="Q8C092">
    <property type="glycosylation" value="1 site, 1 O-linked glycan (1 site)"/>
</dbReference>
<dbReference type="iPTMnet" id="Q8C092"/>
<dbReference type="PhosphoSitePlus" id="Q8C092"/>
<dbReference type="PaxDb" id="10090-ENSMUSP00000026027"/>
<dbReference type="PeptideAtlas" id="Q8C092"/>
<dbReference type="ProteomicsDB" id="263243"/>
<dbReference type="Pumba" id="Q8C092"/>
<dbReference type="DNASU" id="226182"/>
<dbReference type="GeneID" id="226182"/>
<dbReference type="KEGG" id="mmu:226182"/>
<dbReference type="AGR" id="MGI:2442144"/>
<dbReference type="CTD" id="6877"/>
<dbReference type="MGI" id="MGI:2442144">
    <property type="gene designation" value="Taf5"/>
</dbReference>
<dbReference type="eggNOG" id="KOG0263">
    <property type="taxonomic scope" value="Eukaryota"/>
</dbReference>
<dbReference type="InParanoid" id="Q8C092"/>
<dbReference type="OrthoDB" id="10266330at2759"/>
<dbReference type="PhylomeDB" id="Q8C092"/>
<dbReference type="Reactome" id="R-MMU-674695">
    <property type="pathway name" value="RNA Polymerase II Pre-transcription Events"/>
</dbReference>
<dbReference type="Reactome" id="R-MMU-6804756">
    <property type="pathway name" value="Regulation of TP53 Activity through Phosphorylation"/>
</dbReference>
<dbReference type="Reactome" id="R-MMU-6807505">
    <property type="pathway name" value="RNA polymerase II transcribes snRNA genes"/>
</dbReference>
<dbReference type="Reactome" id="R-MMU-73776">
    <property type="pathway name" value="RNA Polymerase II Promoter Escape"/>
</dbReference>
<dbReference type="Reactome" id="R-MMU-73779">
    <property type="pathway name" value="RNA Polymerase II Transcription Pre-Initiation And Promoter Opening"/>
</dbReference>
<dbReference type="Reactome" id="R-MMU-75953">
    <property type="pathway name" value="RNA Polymerase II Transcription Initiation"/>
</dbReference>
<dbReference type="Reactome" id="R-MMU-76042">
    <property type="pathway name" value="RNA Polymerase II Transcription Initiation And Promoter Clearance"/>
</dbReference>
<dbReference type="BioGRID-ORCS" id="226182">
    <property type="hits" value="22 hits in 79 CRISPR screens"/>
</dbReference>
<dbReference type="ChiTaRS" id="Taf5">
    <property type="organism name" value="mouse"/>
</dbReference>
<dbReference type="PRO" id="PR:Q8C092"/>
<dbReference type="Proteomes" id="UP000000589">
    <property type="component" value="Unplaced"/>
</dbReference>
<dbReference type="RNAct" id="Q8C092">
    <property type="molecule type" value="protein"/>
</dbReference>
<dbReference type="GO" id="GO:0005634">
    <property type="term" value="C:nucleus"/>
    <property type="evidence" value="ECO:0000314"/>
    <property type="project" value="MGI"/>
</dbReference>
<dbReference type="GO" id="GO:0005669">
    <property type="term" value="C:transcription factor TFIID complex"/>
    <property type="evidence" value="ECO:0000266"/>
    <property type="project" value="MGI"/>
</dbReference>
<dbReference type="GO" id="GO:0033276">
    <property type="term" value="C:transcription factor TFTC complex"/>
    <property type="evidence" value="ECO:0000303"/>
    <property type="project" value="ComplexPortal"/>
</dbReference>
<dbReference type="GO" id="GO:0003677">
    <property type="term" value="F:DNA binding"/>
    <property type="evidence" value="ECO:0000314"/>
    <property type="project" value="MGI"/>
</dbReference>
<dbReference type="GO" id="GO:1990841">
    <property type="term" value="F:promoter-specific chromatin binding"/>
    <property type="evidence" value="ECO:0000314"/>
    <property type="project" value="MGI"/>
</dbReference>
<dbReference type="GO" id="GO:0042789">
    <property type="term" value="P:mRNA transcription by RNA polymerase II"/>
    <property type="evidence" value="ECO:0000266"/>
    <property type="project" value="ComplexPortal"/>
</dbReference>
<dbReference type="GO" id="GO:0045893">
    <property type="term" value="P:positive regulation of DNA-templated transcription"/>
    <property type="evidence" value="ECO:0000303"/>
    <property type="project" value="ComplexPortal"/>
</dbReference>
<dbReference type="GO" id="GO:0060261">
    <property type="term" value="P:positive regulation of transcription initiation by RNA polymerase II"/>
    <property type="evidence" value="ECO:0000266"/>
    <property type="project" value="ComplexPortal"/>
</dbReference>
<dbReference type="GO" id="GO:0006282">
    <property type="term" value="P:regulation of DNA repair"/>
    <property type="evidence" value="ECO:0000303"/>
    <property type="project" value="ComplexPortal"/>
</dbReference>
<dbReference type="GO" id="GO:0006357">
    <property type="term" value="P:regulation of transcription by RNA polymerase II"/>
    <property type="evidence" value="ECO:0000266"/>
    <property type="project" value="ComplexPortal"/>
</dbReference>
<dbReference type="GO" id="GO:0051123">
    <property type="term" value="P:RNA polymerase II preinitiation complex assembly"/>
    <property type="evidence" value="ECO:0000266"/>
    <property type="project" value="ComplexPortal"/>
</dbReference>
<dbReference type="CDD" id="cd08044">
    <property type="entry name" value="TAF5_NTD2"/>
    <property type="match status" value="1"/>
</dbReference>
<dbReference type="CDD" id="cd00200">
    <property type="entry name" value="WD40"/>
    <property type="match status" value="1"/>
</dbReference>
<dbReference type="FunFam" id="1.25.40.500:FF:000001">
    <property type="entry name" value="Transcription initiation factor TFIID subunit 5"/>
    <property type="match status" value="1"/>
</dbReference>
<dbReference type="FunFam" id="2.130.10.10:FF:000243">
    <property type="entry name" value="Transcription initiation factor TFIID subunit 5"/>
    <property type="match status" value="1"/>
</dbReference>
<dbReference type="Gene3D" id="1.25.40.500">
    <property type="entry name" value="TFIID subunit TAF5, NTD2 domain"/>
    <property type="match status" value="1"/>
</dbReference>
<dbReference type="Gene3D" id="2.130.10.10">
    <property type="entry name" value="YVTN repeat-like/Quinoprotein amine dehydrogenase"/>
    <property type="match status" value="2"/>
</dbReference>
<dbReference type="InterPro" id="IPR020472">
    <property type="entry name" value="G-protein_beta_WD-40_rep"/>
</dbReference>
<dbReference type="InterPro" id="IPR006594">
    <property type="entry name" value="LisH"/>
</dbReference>
<dbReference type="InterPro" id="IPR007582">
    <property type="entry name" value="TFIID_NTD2"/>
</dbReference>
<dbReference type="InterPro" id="IPR037264">
    <property type="entry name" value="TFIID_NTD2_sf"/>
</dbReference>
<dbReference type="InterPro" id="IPR015943">
    <property type="entry name" value="WD40/YVTN_repeat-like_dom_sf"/>
</dbReference>
<dbReference type="InterPro" id="IPR019775">
    <property type="entry name" value="WD40_repeat_CS"/>
</dbReference>
<dbReference type="InterPro" id="IPR036322">
    <property type="entry name" value="WD40_repeat_dom_sf"/>
</dbReference>
<dbReference type="InterPro" id="IPR001680">
    <property type="entry name" value="WD40_rpt"/>
</dbReference>
<dbReference type="PANTHER" id="PTHR19879">
    <property type="entry name" value="TRANSCRIPTION INITIATION FACTOR TFIID"/>
    <property type="match status" value="1"/>
</dbReference>
<dbReference type="PANTHER" id="PTHR19879:SF4">
    <property type="entry name" value="TRANSCRIPTION INITIATION FACTOR TFIID SUBUNIT 5"/>
    <property type="match status" value="1"/>
</dbReference>
<dbReference type="Pfam" id="PF04494">
    <property type="entry name" value="TFIID_NTD2"/>
    <property type="match status" value="1"/>
</dbReference>
<dbReference type="Pfam" id="PF00400">
    <property type="entry name" value="WD40"/>
    <property type="match status" value="6"/>
</dbReference>
<dbReference type="PRINTS" id="PR00320">
    <property type="entry name" value="GPROTEINBRPT"/>
</dbReference>
<dbReference type="SMART" id="SM00320">
    <property type="entry name" value="WD40"/>
    <property type="match status" value="6"/>
</dbReference>
<dbReference type="SUPFAM" id="SSF160897">
    <property type="entry name" value="Taf5 N-terminal domain-like"/>
    <property type="match status" value="1"/>
</dbReference>
<dbReference type="SUPFAM" id="SSF50978">
    <property type="entry name" value="WD40 repeat-like"/>
    <property type="match status" value="1"/>
</dbReference>
<dbReference type="PROSITE" id="PS50896">
    <property type="entry name" value="LISH"/>
    <property type="match status" value="1"/>
</dbReference>
<dbReference type="PROSITE" id="PS00678">
    <property type="entry name" value="WD_REPEATS_1"/>
    <property type="match status" value="3"/>
</dbReference>
<dbReference type="PROSITE" id="PS50082">
    <property type="entry name" value="WD_REPEATS_2"/>
    <property type="match status" value="6"/>
</dbReference>
<dbReference type="PROSITE" id="PS50294">
    <property type="entry name" value="WD_REPEATS_REGION"/>
    <property type="match status" value="2"/>
</dbReference>
<sequence length="801" mass="87045">MAALAEEQTEVAVKLEPEGPPTLLPPQAGDGAGEGSGGTPNNGPNGGGGGNVAVAAAAGGDGGTPKPGVAVSAAAPAGAAPVPAAPAEAGAPHDRQTLLAVLQFLRQSNLREAEEALRREARLLEEAVAGSGAPGELDGAGAEAASALLSRVTASVPGSAAPEPPGTGASVTSVFSGSASGPAAPGKVASVAVEDQPDVSAVLSAYNQQGDPTMYEEYYSGLKHFIECSLDCHRAELSQLFYPLFVHMYLELVYNQHENEAKSFFEKFHGDQECYYQDDLRVLSSLTKKEHMKGNETMLDFRTSKFVLRIYRDSYQLLKRHLQEKQNNQIWNIVQEHLYIDIFDGMPRSKQQIDAMVGSLAGEAKREANKSKVFFGLLKEPEIEVPLDDEDEEGENEEGKPKKKKPKKDSIGSKSKKQDPNAPPQNRIPLPELKDSDKLDKIMNMKETTKRVRLGPDCLPSICFYTFLNAYQGLTAVDVTDDSSLIAGGFADSTVRVWSVTPKKLRSVKQASDLSLIDKESDDVLERIMDEKTASELKILYGHSGPVYGASFSPDRNYLLSSSEDGTVRLWSLQTFTCLVGYKGHNYPVWDTQFSPYGYYFVSGGHDRVARLWATDHYQPLRIFAGHLADVNCTRYHPNSNYVATGSADRTVRLWDVLNGNCVRIFTGHKGPIHSLTFSPNGRFLATGATDGRVLLWDIGHGLMVGELKGHTDTVCSLRFSRDGEILASGSMDNTVRLWDAVKAFEDLETDDFTTATGHINLPENSQELLLGTYMTKSTPVVHLHFTRRNLVLAAGAYSPQ</sequence>
<gene>
    <name type="primary">Taf5</name>
</gene>
<proteinExistence type="evidence at protein level"/>
<evidence type="ECO:0000250" key="1"/>
<evidence type="ECO:0000250" key="2">
    <source>
        <dbReference type="UniProtKB" id="Q15542"/>
    </source>
</evidence>
<evidence type="ECO:0000255" key="3">
    <source>
        <dbReference type="PROSITE-ProRule" id="PRU00126"/>
    </source>
</evidence>
<evidence type="ECO:0000256" key="4">
    <source>
        <dbReference type="SAM" id="MobiDB-lite"/>
    </source>
</evidence>
<evidence type="ECO:0000305" key="5"/>
<protein>
    <recommendedName>
        <fullName>Transcription initiation factor TFIID subunit 5</fullName>
    </recommendedName>
    <alternativeName>
        <fullName>Transcription initiation factor TFIID 100 kDa subunit</fullName>
        <shortName>TAF(II)100</shortName>
        <shortName>TAFII-100</shortName>
        <shortName>TAFII100</shortName>
    </alternativeName>
</protein>
<comment type="function">
    <text evidence="2">The TFIID basal transcription factor complex plays a major role in the initiation of RNA polymerase II (Pol II)-dependent transcription. TFIID recognizes and binds promoters with or without a TATA box via its subunit TBP, a TATA-box-binding protein, and promotes assembly of the pre-initiation complex (PIC). The TFIID complex consists of TBP and TBP-associated factors (TAFs), including TAF1, TAF2, TAF3, TAF4, TAF5, TAF6, TAF7, TAF8, TAF9, TAF10, TAF11, TAF12 and TAF13. The TFIID complex structure can be divided into 3 modules TFIID-A, TFIID-B, and TFIID-C. TAF5 is involved in two modules of TFIID, in TFIID-A together with TAF3 and TBP, and in TFIID-B with TAF8. Involved in contacts between TFIID and TFIIF in the PIC.</text>
</comment>
<comment type="subunit">
    <text evidence="2">Homodimer. Component of the TFIID basal transcription factor complex, composed of TATA-box-binding protein TBP, and a number of TBP-associated factors (TAFs), including TAF1, TAF2, TAF3, TAF4, TAF5, TAF6, TAF7, TAF8, TAF9, TAF10, TAF11, TAF12 and TAF13. The TFIID complex structure can be divided into 3 modules TFIID-A, TFIID-B, and TFIID-C. TAF5 forms the TFIID-A module together with TAF3 and TBP, and in TFIID-B with TAF8. Component of the TFTC-HAT complex, at least composed of TAF5L, TAF6L, TADA3L, SUPT3H/SPT3, TAF2, TAF4, TAF5, GCN5L2/GCN5, TAF10 and TRRAP. TBP is not part of the TFTC-HAT complex. Interacts strongly with the histone H4-related TAF6 and the histone H3-related TAF9, as well as a stable complex comprised of both TAF6 and TAF9. Apparently weaker interactions with TBP, TAF1, TAF11, and TAF12, but not TAF7, also have been observed.</text>
</comment>
<comment type="subcellular location">
    <subcellularLocation>
        <location evidence="1">Nucleus</location>
    </subcellularLocation>
</comment>
<comment type="domain">
    <text evidence="1">Distinct domains of TAF5/TAFII100 are required for functional interaction with transcription factor TFIIFB (RAP30) and incorporation into the TFIID complex.</text>
</comment>
<comment type="similarity">
    <text evidence="5">Belongs to the WD repeat TAF5 family.</text>
</comment>